<name>RAPA_YERPP</name>
<protein>
    <recommendedName>
        <fullName evidence="1">RNA polymerase-associated protein RapA</fullName>
        <ecNumber evidence="1">3.6.4.-</ecNumber>
    </recommendedName>
    <alternativeName>
        <fullName evidence="1">ATP-dependent helicase HepA</fullName>
    </alternativeName>
</protein>
<comment type="function">
    <text evidence="1">Transcription regulator that activates transcription by stimulating RNA polymerase (RNAP) recycling in case of stress conditions such as supercoiled DNA or high salt concentrations. Probably acts by releasing the RNAP, when it is trapped or immobilized on tightly supercoiled DNA. Does not activate transcription on linear DNA. Probably not involved in DNA repair.</text>
</comment>
<comment type="subunit">
    <text evidence="1">Interacts with the RNAP. Has a higher affinity for the core RNAP than for the holoenzyme. Its ATPase activity is stimulated by binding to RNAP.</text>
</comment>
<comment type="similarity">
    <text evidence="1">Belongs to the SNF2/RAD54 helicase family. RapA subfamily.</text>
</comment>
<sequence>MPFTLGQRWISDTESELGLGTVVAIDVRMITLLFPATGENRLYARNDSPITRVMFNPSDTITHHEGWQLKVEEVTQENGLITYIGTRLDTEETGVAMREVLLDSKLTFSKPQDRLFAGQIDRMDRFALRFRARKYQSEQFRLPWSGLRGIRASLIPHQLHIAYEVGQRHAPRVLLADEVGLGKTIEAGMIIHQQLLAGRAERVLIVVPESLQHQWLVEMLRRFNLRFSLFDDSRYSEALLDSSNPFDTEQMVICSLDFVRRNKQRLEQLADASWDLLVVDEAHHMAWSEEAPSREYQVIEQLAEHIPGVLLLTATPEQLGQQSHFARLRLLDPDRFHDYEEFVNEQQKYRPIADAVTLLLGGERLTDDKLNLLGELIDEQDIEPLLKAANSQSEDSEAARQELVTMLMDRHGTSRVLFRNTRNGVKGFPHRVLHQIKLPLPTQYQTAIKVSGIMGAKKTLDARAKDMLYPEQIYQEFEGENATWWNFDPRVEWLLNYLVANRGEKVLVICAQAATALQLEQVLREREAIRAAVFHEGLSLIERDRAAAYFASEEDGAQVLLCSEIGSEGRNFQFACQLVMFDLPFNPDLLEQRIGRLDRIGQNREIQIMVPYLEDTAQAILVRWYHEGLDAFEHTCPTGRTIYDSSYQELISYLATPSEQEGLDEFIHTCRQQHEGLKLQLEQGRDRLLEMHSNGGEHGQELAQSIAEQDNDINLVSFALNLFDIVGINQEDRSDNLIVLTPSDHMLVPDFPGLPPDGCTVTFDREQALSREDAQFVSWEHPIIRNGLDLILSGDTGSCAVSLLKNKALPVGTLLAELVYVVEAQAPKHLQLTRFLPPTPVRMLMDRNGTNLAAQVEFESFNRQLNAVNRHTSSKLVNAVQQEVHTMLQQAEALVEAQAQALIETAKREADDKLSTELARLEALKAVNPNIRDDEIEALEHNRKMVLENLNQAGWRLDAIRLVVVTHQ</sequence>
<reference key="1">
    <citation type="submission" date="2007-02" db="EMBL/GenBank/DDBJ databases">
        <title>Complete sequence of chromosome of Yersinia pestis Pestoides F.</title>
        <authorList>
            <consortium name="US DOE Joint Genome Institute"/>
            <person name="Copeland A."/>
            <person name="Lucas S."/>
            <person name="Lapidus A."/>
            <person name="Barry K."/>
            <person name="Detter J.C."/>
            <person name="Glavina del Rio T."/>
            <person name="Hammon N."/>
            <person name="Israni S."/>
            <person name="Dalin E."/>
            <person name="Tice H."/>
            <person name="Pitluck S."/>
            <person name="Di Bartolo G."/>
            <person name="Chain P."/>
            <person name="Malfatti S."/>
            <person name="Shin M."/>
            <person name="Vergez L."/>
            <person name="Schmutz J."/>
            <person name="Larimer F."/>
            <person name="Land M."/>
            <person name="Hauser L."/>
            <person name="Worsham P."/>
            <person name="Chu M."/>
            <person name="Bearden S."/>
            <person name="Garcia E."/>
            <person name="Richardson P."/>
        </authorList>
    </citation>
    <scope>NUCLEOTIDE SEQUENCE [LARGE SCALE GENOMIC DNA]</scope>
    <source>
        <strain>Pestoides F</strain>
    </source>
</reference>
<dbReference type="EC" id="3.6.4.-" evidence="1"/>
<dbReference type="EMBL" id="CP000668">
    <property type="protein sequence ID" value="ABP41475.1"/>
    <property type="molecule type" value="Genomic_DNA"/>
</dbReference>
<dbReference type="RefSeq" id="WP_002220588.1">
    <property type="nucleotide sequence ID" value="NZ_CP009715.1"/>
</dbReference>
<dbReference type="SMR" id="A4TQB3"/>
<dbReference type="GeneID" id="57974093"/>
<dbReference type="KEGG" id="ypp:YPDSF_3117"/>
<dbReference type="PATRIC" id="fig|386656.14.peg.1239"/>
<dbReference type="GO" id="GO:0005524">
    <property type="term" value="F:ATP binding"/>
    <property type="evidence" value="ECO:0007669"/>
    <property type="project" value="UniProtKB-UniRule"/>
</dbReference>
<dbReference type="GO" id="GO:0003677">
    <property type="term" value="F:DNA binding"/>
    <property type="evidence" value="ECO:0007669"/>
    <property type="project" value="UniProtKB-KW"/>
</dbReference>
<dbReference type="GO" id="GO:0004386">
    <property type="term" value="F:helicase activity"/>
    <property type="evidence" value="ECO:0007669"/>
    <property type="project" value="UniProtKB-UniRule"/>
</dbReference>
<dbReference type="GO" id="GO:0016817">
    <property type="term" value="F:hydrolase activity, acting on acid anhydrides"/>
    <property type="evidence" value="ECO:0007669"/>
    <property type="project" value="InterPro"/>
</dbReference>
<dbReference type="GO" id="GO:0006355">
    <property type="term" value="P:regulation of DNA-templated transcription"/>
    <property type="evidence" value="ECO:0007669"/>
    <property type="project" value="UniProtKB-UniRule"/>
</dbReference>
<dbReference type="CDD" id="cd18011">
    <property type="entry name" value="DEXDc_RapA"/>
    <property type="match status" value="1"/>
</dbReference>
<dbReference type="CDD" id="cd18793">
    <property type="entry name" value="SF2_C_SNF"/>
    <property type="match status" value="1"/>
</dbReference>
<dbReference type="FunFam" id="3.40.50.10810:FF:000012">
    <property type="entry name" value="RNA polymerase-associated protein RapA"/>
    <property type="match status" value="1"/>
</dbReference>
<dbReference type="Gene3D" id="2.30.30.140">
    <property type="match status" value="1"/>
</dbReference>
<dbReference type="Gene3D" id="2.30.30.930">
    <property type="match status" value="1"/>
</dbReference>
<dbReference type="Gene3D" id="3.30.360.80">
    <property type="match status" value="1"/>
</dbReference>
<dbReference type="Gene3D" id="6.10.140.1500">
    <property type="match status" value="1"/>
</dbReference>
<dbReference type="Gene3D" id="6.10.140.2230">
    <property type="match status" value="1"/>
</dbReference>
<dbReference type="Gene3D" id="3.40.50.300">
    <property type="entry name" value="P-loop containing nucleotide triphosphate hydrolases"/>
    <property type="match status" value="1"/>
</dbReference>
<dbReference type="Gene3D" id="3.40.50.10810">
    <property type="entry name" value="Tandem AAA-ATPase domain"/>
    <property type="match status" value="1"/>
</dbReference>
<dbReference type="HAMAP" id="MF_01821">
    <property type="entry name" value="Helicase_RapA"/>
    <property type="match status" value="1"/>
</dbReference>
<dbReference type="InterPro" id="IPR014001">
    <property type="entry name" value="Helicase_ATP-bd"/>
</dbReference>
<dbReference type="InterPro" id="IPR001650">
    <property type="entry name" value="Helicase_C-like"/>
</dbReference>
<dbReference type="InterPro" id="IPR023949">
    <property type="entry name" value="Helicase_RapA"/>
</dbReference>
<dbReference type="InterPro" id="IPR027417">
    <property type="entry name" value="P-loop_NTPase"/>
</dbReference>
<dbReference type="InterPro" id="IPR022737">
    <property type="entry name" value="RapA_C"/>
</dbReference>
<dbReference type="InterPro" id="IPR038718">
    <property type="entry name" value="SNF2-like_sf"/>
</dbReference>
<dbReference type="InterPro" id="IPR049730">
    <property type="entry name" value="SNF2/RAD54-like_C"/>
</dbReference>
<dbReference type="InterPro" id="IPR000330">
    <property type="entry name" value="SNF2_N"/>
</dbReference>
<dbReference type="InterPro" id="IPR040765">
    <property type="entry name" value="Tudor_1_RapA"/>
</dbReference>
<dbReference type="InterPro" id="IPR040766">
    <property type="entry name" value="Tudor_2_RapA"/>
</dbReference>
<dbReference type="NCBIfam" id="NF003426">
    <property type="entry name" value="PRK04914.1"/>
    <property type="match status" value="1"/>
</dbReference>
<dbReference type="PANTHER" id="PTHR45766">
    <property type="entry name" value="DNA ANNEALING HELICASE AND ENDONUCLEASE ZRANB3 FAMILY MEMBER"/>
    <property type="match status" value="1"/>
</dbReference>
<dbReference type="PANTHER" id="PTHR45766:SF6">
    <property type="entry name" value="SWI_SNF-RELATED MATRIX-ASSOCIATED ACTIN-DEPENDENT REGULATOR OF CHROMATIN SUBFAMILY A-LIKE PROTEIN 1"/>
    <property type="match status" value="1"/>
</dbReference>
<dbReference type="Pfam" id="PF00271">
    <property type="entry name" value="Helicase_C"/>
    <property type="match status" value="1"/>
</dbReference>
<dbReference type="Pfam" id="PF12137">
    <property type="entry name" value="RapA_C"/>
    <property type="match status" value="1"/>
</dbReference>
<dbReference type="Pfam" id="PF00176">
    <property type="entry name" value="SNF2-rel_dom"/>
    <property type="match status" value="1"/>
</dbReference>
<dbReference type="Pfam" id="PF18339">
    <property type="entry name" value="Tudor_1_RapA"/>
    <property type="match status" value="1"/>
</dbReference>
<dbReference type="Pfam" id="PF18337">
    <property type="entry name" value="Tudor_RapA"/>
    <property type="match status" value="1"/>
</dbReference>
<dbReference type="SMART" id="SM00487">
    <property type="entry name" value="DEXDc"/>
    <property type="match status" value="1"/>
</dbReference>
<dbReference type="SMART" id="SM00490">
    <property type="entry name" value="HELICc"/>
    <property type="match status" value="1"/>
</dbReference>
<dbReference type="SUPFAM" id="SSF52540">
    <property type="entry name" value="P-loop containing nucleoside triphosphate hydrolases"/>
    <property type="match status" value="2"/>
</dbReference>
<dbReference type="PROSITE" id="PS51192">
    <property type="entry name" value="HELICASE_ATP_BIND_1"/>
    <property type="match status" value="1"/>
</dbReference>
<dbReference type="PROSITE" id="PS51194">
    <property type="entry name" value="HELICASE_CTER"/>
    <property type="match status" value="1"/>
</dbReference>
<gene>
    <name evidence="1" type="primary">rapA</name>
    <name type="ordered locus">YPDSF_3117</name>
</gene>
<organism>
    <name type="scientific">Yersinia pestis (strain Pestoides F)</name>
    <dbReference type="NCBI Taxonomy" id="386656"/>
    <lineage>
        <taxon>Bacteria</taxon>
        <taxon>Pseudomonadati</taxon>
        <taxon>Pseudomonadota</taxon>
        <taxon>Gammaproteobacteria</taxon>
        <taxon>Enterobacterales</taxon>
        <taxon>Yersiniaceae</taxon>
        <taxon>Yersinia</taxon>
    </lineage>
</organism>
<proteinExistence type="inferred from homology"/>
<evidence type="ECO:0000255" key="1">
    <source>
        <dbReference type="HAMAP-Rule" id="MF_01821"/>
    </source>
</evidence>
<keyword id="KW-0010">Activator</keyword>
<keyword id="KW-0067">ATP-binding</keyword>
<keyword id="KW-0238">DNA-binding</keyword>
<keyword id="KW-0347">Helicase</keyword>
<keyword id="KW-0378">Hydrolase</keyword>
<keyword id="KW-0547">Nucleotide-binding</keyword>
<keyword id="KW-0804">Transcription</keyword>
<keyword id="KW-0805">Transcription regulation</keyword>
<accession>A4TQB3</accession>
<feature type="chain" id="PRO_1000088403" description="RNA polymerase-associated protein RapA">
    <location>
        <begin position="1"/>
        <end position="968"/>
    </location>
</feature>
<feature type="domain" description="Helicase ATP-binding" evidence="1">
    <location>
        <begin position="164"/>
        <end position="334"/>
    </location>
</feature>
<feature type="domain" description="Helicase C-terminal" evidence="1">
    <location>
        <begin position="490"/>
        <end position="644"/>
    </location>
</feature>
<feature type="short sequence motif" description="DEAH box">
    <location>
        <begin position="280"/>
        <end position="283"/>
    </location>
</feature>
<feature type="binding site" evidence="1">
    <location>
        <begin position="177"/>
        <end position="184"/>
    </location>
    <ligand>
        <name>ATP</name>
        <dbReference type="ChEBI" id="CHEBI:30616"/>
    </ligand>
</feature>